<evidence type="ECO:0000269" key="1">
    <source>
    </source>
</evidence>
<evidence type="ECO:0000269" key="2">
    <source>
    </source>
</evidence>
<evidence type="ECO:0000269" key="3">
    <source>
    </source>
</evidence>
<evidence type="ECO:0000269" key="4">
    <source>
    </source>
</evidence>
<evidence type="ECO:0000269" key="5">
    <source>
    </source>
</evidence>
<evidence type="ECO:0000269" key="6">
    <source>
    </source>
</evidence>
<evidence type="ECO:0000269" key="7">
    <source>
    </source>
</evidence>
<evidence type="ECO:0000269" key="8">
    <source>
    </source>
</evidence>
<evidence type="ECO:0000269" key="9">
    <source>
    </source>
</evidence>
<evidence type="ECO:0000269" key="10">
    <source>
    </source>
</evidence>
<evidence type="ECO:0000269" key="11">
    <source>
    </source>
</evidence>
<evidence type="ECO:0000269" key="12">
    <source>
    </source>
</evidence>
<evidence type="ECO:0000269" key="13">
    <source>
    </source>
</evidence>
<evidence type="ECO:0000269" key="14">
    <source>
    </source>
</evidence>
<evidence type="ECO:0000269" key="15">
    <source>
    </source>
</evidence>
<evidence type="ECO:0000269" key="16">
    <source>
    </source>
</evidence>
<evidence type="ECO:0000269" key="17">
    <source>
    </source>
</evidence>
<evidence type="ECO:0000269" key="18">
    <source>
    </source>
</evidence>
<evidence type="ECO:0000269" key="19">
    <source>
    </source>
</evidence>
<evidence type="ECO:0000303" key="20">
    <source>
    </source>
</evidence>
<evidence type="ECO:0000303" key="21">
    <source>
    </source>
</evidence>
<evidence type="ECO:0000303" key="22">
    <source>
    </source>
</evidence>
<evidence type="ECO:0000303" key="23">
    <source>
    </source>
</evidence>
<evidence type="ECO:0000303" key="24">
    <source>
    </source>
</evidence>
<evidence type="ECO:0000305" key="25"/>
<evidence type="ECO:0000312" key="26">
    <source>
        <dbReference type="HGNC" id="HGNC:4116"/>
    </source>
</evidence>
<evidence type="ECO:0007829" key="27">
    <source>
        <dbReference type="PDB" id="1EK5"/>
    </source>
</evidence>
<evidence type="ECO:0007829" key="28">
    <source>
        <dbReference type="PDB" id="1EK6"/>
    </source>
</evidence>
<keyword id="KW-0002">3D-structure</keyword>
<keyword id="KW-0025">Alternative splicing</keyword>
<keyword id="KW-0119">Carbohydrate metabolism</keyword>
<keyword id="KW-0225">Disease variant</keyword>
<keyword id="KW-0299">Galactose metabolism</keyword>
<keyword id="KW-0413">Isomerase</keyword>
<keyword id="KW-0520">NAD</keyword>
<keyword id="KW-1267">Proteomics identification</keyword>
<keyword id="KW-1185">Reference proteome</keyword>
<dbReference type="EC" id="5.1.3.2" evidence="11"/>
<dbReference type="EC" id="5.1.3.7" evidence="11"/>
<dbReference type="EMBL" id="L41668">
    <property type="protein sequence ID" value="AAB86498.1"/>
    <property type="molecule type" value="mRNA"/>
</dbReference>
<dbReference type="EMBL" id="AF022382">
    <property type="protein sequence ID" value="AAC39645.1"/>
    <property type="molecule type" value="Genomic_DNA"/>
</dbReference>
<dbReference type="EMBL" id="DQ233667">
    <property type="protein sequence ID" value="ABB04109.1"/>
    <property type="molecule type" value="Genomic_DNA"/>
</dbReference>
<dbReference type="EMBL" id="DQ233668">
    <property type="protein sequence ID" value="ABB04110.1"/>
    <property type="molecule type" value="mRNA"/>
</dbReference>
<dbReference type="EMBL" id="AK057302">
    <property type="protein sequence ID" value="BAG51901.1"/>
    <property type="molecule type" value="mRNA"/>
</dbReference>
<dbReference type="EMBL" id="AK314397">
    <property type="protein sequence ID" value="BAG37021.1"/>
    <property type="molecule type" value="mRNA"/>
</dbReference>
<dbReference type="EMBL" id="AL031295">
    <property type="status" value="NOT_ANNOTATED_CDS"/>
    <property type="molecule type" value="Genomic_DNA"/>
</dbReference>
<dbReference type="EMBL" id="CH471134">
    <property type="protein sequence ID" value="EAW95083.1"/>
    <property type="status" value="ALT_SEQ"/>
    <property type="molecule type" value="Genomic_DNA"/>
</dbReference>
<dbReference type="EMBL" id="CH471134">
    <property type="protein sequence ID" value="EAW95084.1"/>
    <property type="status" value="ALT_SEQ"/>
    <property type="molecule type" value="Genomic_DNA"/>
</dbReference>
<dbReference type="EMBL" id="CH471134">
    <property type="protein sequence ID" value="EAW95086.1"/>
    <property type="status" value="ALT_SEQ"/>
    <property type="molecule type" value="Genomic_DNA"/>
</dbReference>
<dbReference type="EMBL" id="CH471134">
    <property type="protein sequence ID" value="EAW95090.1"/>
    <property type="status" value="ALT_SEQ"/>
    <property type="molecule type" value="Genomic_DNA"/>
</dbReference>
<dbReference type="EMBL" id="CH471134">
    <property type="protein sequence ID" value="EAW95091.1"/>
    <property type="status" value="ALT_SEQ"/>
    <property type="molecule type" value="Genomic_DNA"/>
</dbReference>
<dbReference type="EMBL" id="CH471134">
    <property type="protein sequence ID" value="EAW95092.1"/>
    <property type="status" value="ALT_SEQ"/>
    <property type="molecule type" value="Genomic_DNA"/>
</dbReference>
<dbReference type="EMBL" id="CH471134">
    <property type="protein sequence ID" value="EAW95093.1"/>
    <property type="status" value="ALT_SEQ"/>
    <property type="molecule type" value="Genomic_DNA"/>
</dbReference>
<dbReference type="EMBL" id="BC001273">
    <property type="protein sequence ID" value="AAH01273.1"/>
    <property type="molecule type" value="mRNA"/>
</dbReference>
<dbReference type="EMBL" id="BC050685">
    <property type="protein sequence ID" value="AAH50685.2"/>
    <property type="molecule type" value="mRNA"/>
</dbReference>
<dbReference type="CCDS" id="CCDS242.1">
    <molecule id="Q14376-1"/>
</dbReference>
<dbReference type="RefSeq" id="NP_000394.2">
    <molecule id="Q14376-1"/>
    <property type="nucleotide sequence ID" value="NM_000403.4"/>
</dbReference>
<dbReference type="RefSeq" id="NP_001008217.1">
    <molecule id="Q14376-1"/>
    <property type="nucleotide sequence ID" value="NM_001008216.2"/>
</dbReference>
<dbReference type="RefSeq" id="NP_001121093.1">
    <molecule id="Q14376-1"/>
    <property type="nucleotide sequence ID" value="NM_001127621.2"/>
</dbReference>
<dbReference type="PDB" id="1EK5">
    <property type="method" value="X-ray"/>
    <property type="resolution" value="1.80 A"/>
    <property type="chains" value="A=1-348"/>
</dbReference>
<dbReference type="PDB" id="1EK6">
    <property type="method" value="X-ray"/>
    <property type="resolution" value="1.50 A"/>
    <property type="chains" value="A/B=1-348"/>
</dbReference>
<dbReference type="PDB" id="1HZJ">
    <property type="method" value="X-ray"/>
    <property type="resolution" value="1.50 A"/>
    <property type="chains" value="A/B=1-348"/>
</dbReference>
<dbReference type="PDB" id="1I3K">
    <property type="method" value="X-ray"/>
    <property type="resolution" value="1.50 A"/>
    <property type="chains" value="A/B=1-348"/>
</dbReference>
<dbReference type="PDB" id="1I3L">
    <property type="method" value="X-ray"/>
    <property type="resolution" value="1.50 A"/>
    <property type="chains" value="A/B=1-348"/>
</dbReference>
<dbReference type="PDB" id="1I3M">
    <property type="method" value="X-ray"/>
    <property type="resolution" value="1.50 A"/>
    <property type="chains" value="A/B=1-348"/>
</dbReference>
<dbReference type="PDB" id="1I3N">
    <property type="method" value="X-ray"/>
    <property type="resolution" value="1.50 A"/>
    <property type="chains" value="A/B=1-348"/>
</dbReference>
<dbReference type="PDBsum" id="1EK5"/>
<dbReference type="PDBsum" id="1EK6"/>
<dbReference type="PDBsum" id="1HZJ"/>
<dbReference type="PDBsum" id="1I3K"/>
<dbReference type="PDBsum" id="1I3L"/>
<dbReference type="PDBsum" id="1I3M"/>
<dbReference type="PDBsum" id="1I3N"/>
<dbReference type="SMR" id="Q14376"/>
<dbReference type="BioGRID" id="108855">
    <property type="interactions" value="99"/>
</dbReference>
<dbReference type="FunCoup" id="Q14376">
    <property type="interactions" value="575"/>
</dbReference>
<dbReference type="IntAct" id="Q14376">
    <property type="interactions" value="13"/>
</dbReference>
<dbReference type="STRING" id="9606.ENSP00000483375"/>
<dbReference type="BindingDB" id="Q14376"/>
<dbReference type="ChEMBL" id="CHEMBL5843"/>
<dbReference type="DrugBank" id="DB03501">
    <property type="generic name" value="Galactose-uridine-5'-diphosphate"/>
</dbReference>
<dbReference type="DrugBank" id="DB03095">
    <property type="generic name" value="Tetramethylammonium"/>
</dbReference>
<dbReference type="DrugBank" id="DB03041">
    <property type="generic name" value="UDP-alpha-D-glucuronic acid"/>
</dbReference>
<dbReference type="DrugBank" id="DB01861">
    <property type="generic name" value="Uridine diphosphate glucose"/>
</dbReference>
<dbReference type="DrugBank" id="DB02196">
    <property type="generic name" value="Uridine-Diphosphate-N-Acetylgalactosamine"/>
</dbReference>
<dbReference type="DrugBank" id="DB03397">
    <property type="generic name" value="Uridine-Diphosphate-N-Acetylglucosamine"/>
</dbReference>
<dbReference type="DrugCentral" id="Q14376"/>
<dbReference type="GlyGen" id="Q14376">
    <property type="glycosylation" value="2 sites, 1 O-linked glycan (1 site)"/>
</dbReference>
<dbReference type="iPTMnet" id="Q14376"/>
<dbReference type="MetOSite" id="Q14376"/>
<dbReference type="PhosphoSitePlus" id="Q14376"/>
<dbReference type="SwissPalm" id="Q14376"/>
<dbReference type="BioMuta" id="GALE"/>
<dbReference type="DMDM" id="68056598"/>
<dbReference type="jPOST" id="Q14376"/>
<dbReference type="MassIVE" id="Q14376"/>
<dbReference type="PaxDb" id="9606-ENSP00000483375"/>
<dbReference type="PeptideAtlas" id="Q14376"/>
<dbReference type="ProteomicsDB" id="59972">
    <molecule id="Q14376-1"/>
</dbReference>
<dbReference type="Pumba" id="Q14376"/>
<dbReference type="TopDownProteomics" id="Q14376-1">
    <molecule id="Q14376-1"/>
</dbReference>
<dbReference type="Antibodypedia" id="1527">
    <property type="antibodies" value="310 antibodies from 30 providers"/>
</dbReference>
<dbReference type="DNASU" id="2582"/>
<dbReference type="Ensembl" id="ENST00000374497.7">
    <molecule id="Q14376-1"/>
    <property type="protein sequence ID" value="ENSP00000363621.3"/>
    <property type="gene ID" value="ENSG00000117308.15"/>
</dbReference>
<dbReference type="Ensembl" id="ENST00000617979.5">
    <molecule id="Q14376-1"/>
    <property type="protein sequence ID" value="ENSP00000483375.1"/>
    <property type="gene ID" value="ENSG00000117308.15"/>
</dbReference>
<dbReference type="GeneID" id="2582"/>
<dbReference type="KEGG" id="hsa:2582"/>
<dbReference type="MANE-Select" id="ENST00000617979.5">
    <property type="protein sequence ID" value="ENSP00000483375.1"/>
    <property type="RefSeq nucleotide sequence ID" value="NM_001008216.2"/>
    <property type="RefSeq protein sequence ID" value="NP_001008217.1"/>
</dbReference>
<dbReference type="UCSC" id="uc001bhv.2">
    <molecule id="Q14376-1"/>
    <property type="organism name" value="human"/>
</dbReference>
<dbReference type="AGR" id="HGNC:4116"/>
<dbReference type="CTD" id="2582"/>
<dbReference type="DisGeNET" id="2582"/>
<dbReference type="GeneCards" id="GALE"/>
<dbReference type="GeneReviews" id="GALE"/>
<dbReference type="HGNC" id="HGNC:4116">
    <property type="gene designation" value="GALE"/>
</dbReference>
<dbReference type="HPA" id="ENSG00000117308">
    <property type="expression patterns" value="Tissue enhanced (stomach)"/>
</dbReference>
<dbReference type="MalaCards" id="GALE"/>
<dbReference type="MIM" id="230350">
    <property type="type" value="phenotype"/>
</dbReference>
<dbReference type="MIM" id="606953">
    <property type="type" value="gene"/>
</dbReference>
<dbReference type="MIM" id="620776">
    <property type="type" value="phenotype"/>
</dbReference>
<dbReference type="neXtProt" id="NX_Q14376"/>
<dbReference type="OpenTargets" id="ENSG00000117308"/>
<dbReference type="Orphanet" id="308473">
    <property type="disease" value="Erythrocyte galactose epimerase deficiency"/>
</dbReference>
<dbReference type="Orphanet" id="308487">
    <property type="disease" value="Generalized galactose epimerase deficiency"/>
</dbReference>
<dbReference type="PharmGKB" id="PA28531"/>
<dbReference type="VEuPathDB" id="HostDB:ENSG00000117308"/>
<dbReference type="eggNOG" id="KOG1371">
    <property type="taxonomic scope" value="Eukaryota"/>
</dbReference>
<dbReference type="GeneTree" id="ENSGT00940000158000"/>
<dbReference type="InParanoid" id="Q14376"/>
<dbReference type="OMA" id="GEHLICN"/>
<dbReference type="OrthoDB" id="9402762at2759"/>
<dbReference type="PAN-GO" id="Q14376">
    <property type="GO annotations" value="3 GO annotations based on evolutionary models"/>
</dbReference>
<dbReference type="PhylomeDB" id="Q14376"/>
<dbReference type="TreeFam" id="TF105800"/>
<dbReference type="BioCyc" id="MetaCyc:HS04117-MONOMER"/>
<dbReference type="BRENDA" id="5.1.3.2">
    <property type="organism ID" value="2681"/>
</dbReference>
<dbReference type="BRENDA" id="5.1.3.7">
    <property type="organism ID" value="2681"/>
</dbReference>
<dbReference type="PathwayCommons" id="Q14376"/>
<dbReference type="Reactome" id="R-HSA-5609977">
    <property type="pathway name" value="Defective GALE causes EDG"/>
</dbReference>
<dbReference type="Reactome" id="R-HSA-70370">
    <property type="pathway name" value="Galactose catabolism"/>
</dbReference>
<dbReference type="SABIO-RK" id="Q14376"/>
<dbReference type="SignaLink" id="Q14376"/>
<dbReference type="UniPathway" id="UPA00214"/>
<dbReference type="BioGRID-ORCS" id="2582">
    <property type="hits" value="56 hits in 1164 CRISPR screens"/>
</dbReference>
<dbReference type="EvolutionaryTrace" id="Q14376"/>
<dbReference type="GenomeRNAi" id="2582"/>
<dbReference type="Pharos" id="Q14376">
    <property type="development level" value="Tchem"/>
</dbReference>
<dbReference type="PRO" id="PR:Q14376"/>
<dbReference type="Proteomes" id="UP000005640">
    <property type="component" value="Chromosome 1"/>
</dbReference>
<dbReference type="RNAct" id="Q14376">
    <property type="molecule type" value="protein"/>
</dbReference>
<dbReference type="Bgee" id="ENSG00000117308">
    <property type="expression patterns" value="Expressed in lower esophagus mucosa and 163 other cell types or tissues"/>
</dbReference>
<dbReference type="ExpressionAtlas" id="Q14376">
    <property type="expression patterns" value="baseline and differential"/>
</dbReference>
<dbReference type="GO" id="GO:0005829">
    <property type="term" value="C:cytosol"/>
    <property type="evidence" value="ECO:0000318"/>
    <property type="project" value="GO_Central"/>
</dbReference>
<dbReference type="GO" id="GO:0042802">
    <property type="term" value="F:identical protein binding"/>
    <property type="evidence" value="ECO:0000353"/>
    <property type="project" value="IntAct"/>
</dbReference>
<dbReference type="GO" id="GO:0042803">
    <property type="term" value="F:protein homodimerization activity"/>
    <property type="evidence" value="ECO:0000353"/>
    <property type="project" value="UniProtKB"/>
</dbReference>
<dbReference type="GO" id="GO:0003978">
    <property type="term" value="F:UDP-glucose 4-epimerase activity"/>
    <property type="evidence" value="ECO:0000314"/>
    <property type="project" value="UniProtKB"/>
</dbReference>
<dbReference type="GO" id="GO:0003974">
    <property type="term" value="F:UDP-N-acetylglucosamine 4-epimerase activity"/>
    <property type="evidence" value="ECO:0007669"/>
    <property type="project" value="UniProtKB-EC"/>
</dbReference>
<dbReference type="GO" id="GO:0019388">
    <property type="term" value="P:galactose catabolic process"/>
    <property type="evidence" value="ECO:0000314"/>
    <property type="project" value="UniProtKB"/>
</dbReference>
<dbReference type="GO" id="GO:0033499">
    <property type="term" value="P:galactose catabolic process via UDP-galactose, Leloir pathway"/>
    <property type="evidence" value="ECO:0000318"/>
    <property type="project" value="GO_Central"/>
</dbReference>
<dbReference type="CDD" id="cd05247">
    <property type="entry name" value="UDP_G4E_1_SDR_e"/>
    <property type="match status" value="1"/>
</dbReference>
<dbReference type="Gene3D" id="3.40.50.720">
    <property type="entry name" value="NAD(P)-binding Rossmann-like Domain"/>
    <property type="match status" value="1"/>
</dbReference>
<dbReference type="Gene3D" id="3.90.25.10">
    <property type="entry name" value="UDP-galactose 4-epimerase, domain 1"/>
    <property type="match status" value="1"/>
</dbReference>
<dbReference type="InterPro" id="IPR016040">
    <property type="entry name" value="NAD(P)-bd_dom"/>
</dbReference>
<dbReference type="InterPro" id="IPR036291">
    <property type="entry name" value="NAD(P)-bd_dom_sf"/>
</dbReference>
<dbReference type="InterPro" id="IPR005886">
    <property type="entry name" value="UDP_G4E"/>
</dbReference>
<dbReference type="NCBIfam" id="TIGR01179">
    <property type="entry name" value="galE"/>
    <property type="match status" value="1"/>
</dbReference>
<dbReference type="NCBIfam" id="NF007956">
    <property type="entry name" value="PRK10675.1"/>
    <property type="match status" value="1"/>
</dbReference>
<dbReference type="PANTHER" id="PTHR43725">
    <property type="entry name" value="UDP-GLUCOSE 4-EPIMERASE"/>
    <property type="match status" value="1"/>
</dbReference>
<dbReference type="PANTHER" id="PTHR43725:SF47">
    <property type="entry name" value="UDP-GLUCOSE 4-EPIMERASE"/>
    <property type="match status" value="1"/>
</dbReference>
<dbReference type="Pfam" id="PF16363">
    <property type="entry name" value="GDP_Man_Dehyd"/>
    <property type="match status" value="1"/>
</dbReference>
<dbReference type="PRINTS" id="PR01713">
    <property type="entry name" value="NUCEPIMERASE"/>
</dbReference>
<dbReference type="SUPFAM" id="SSF51735">
    <property type="entry name" value="NAD(P)-binding Rossmann-fold domains"/>
    <property type="match status" value="1"/>
</dbReference>
<proteinExistence type="evidence at protein level"/>
<organism>
    <name type="scientific">Homo sapiens</name>
    <name type="common">Human</name>
    <dbReference type="NCBI Taxonomy" id="9606"/>
    <lineage>
        <taxon>Eukaryota</taxon>
        <taxon>Metazoa</taxon>
        <taxon>Chordata</taxon>
        <taxon>Craniata</taxon>
        <taxon>Vertebrata</taxon>
        <taxon>Euteleostomi</taxon>
        <taxon>Mammalia</taxon>
        <taxon>Eutheria</taxon>
        <taxon>Euarchontoglires</taxon>
        <taxon>Primates</taxon>
        <taxon>Haplorrhini</taxon>
        <taxon>Catarrhini</taxon>
        <taxon>Hominidae</taxon>
        <taxon>Homo</taxon>
    </lineage>
</organism>
<reference key="1">
    <citation type="journal article" date="1995" name="Biochem. Mol. Med.">
        <title>Molecular cloning, characterization, and mapping of a full-length cDNA encoding human UDP-galactose 4'-epimerase.</title>
        <authorList>
            <person name="Daude N."/>
            <person name="Gallaher T.K."/>
            <person name="Zeschnigk M."/>
            <person name="Starzinski-Powitz A."/>
            <person name="Petry K.G."/>
            <person name="Haworth I.S."/>
            <person name="Reichardt J.K.V."/>
        </authorList>
    </citation>
    <scope>NUCLEOTIDE SEQUENCE [MRNA] (ISOFORM 1)</scope>
    <scope>VARIANT VAL-180</scope>
</reference>
<reference key="2">
    <citation type="journal article" date="1998" name="Mol. Genet. Metab.">
        <title>Human UDP-galactose 4'epimerase (GALE) gene and identification of five missense mutations in patients with epimerase deficiency galactosemia.</title>
        <authorList>
            <person name="Maceratesi P."/>
            <person name="Daude N."/>
            <person name="Dallapiccola B."/>
            <person name="Novelli G."/>
            <person name="Allen R."/>
            <person name="Okano Y."/>
            <person name="Reichardt J.K.V."/>
        </authorList>
    </citation>
    <scope>NUCLEOTIDE SEQUENCE [GENOMIC DNA]</scope>
    <scope>VARIANTS GALAC3 GLU-90; GLY-103; ARG-257; MET-313 AND GLU-319</scope>
</reference>
<reference key="3">
    <citation type="journal article" date="2006" name="Am. J. Hum. Genet.">
        <title>Epimerase-deficiency galactosemia is not a binary condition.</title>
        <authorList>
            <person name="Openo K.K."/>
            <person name="Schulz J.M."/>
            <person name="Vargas C.A."/>
            <person name="Orton C.S."/>
            <person name="Epstein M.P."/>
            <person name="Schnur R.E."/>
            <person name="Scaglia F."/>
            <person name="Berry G.T."/>
            <person name="Gottesman G.S."/>
            <person name="Ficicioglu C."/>
            <person name="Slonim A.E."/>
            <person name="Schroer R.J."/>
            <person name="Yu C."/>
            <person name="Rangel V.E."/>
            <person name="Keenan J."/>
            <person name="Lamance K."/>
            <person name="Fridovich-Keil J.L."/>
        </authorList>
    </citation>
    <scope>NUCLEOTIDE SEQUENCE [GENOMIC DNA / MRNA] (ISOFORM 1)</scope>
</reference>
<reference key="4">
    <citation type="journal article" date="2004" name="Nat. Genet.">
        <title>Complete sequencing and characterization of 21,243 full-length human cDNAs.</title>
        <authorList>
            <person name="Ota T."/>
            <person name="Suzuki Y."/>
            <person name="Nishikawa T."/>
            <person name="Otsuki T."/>
            <person name="Sugiyama T."/>
            <person name="Irie R."/>
            <person name="Wakamatsu A."/>
            <person name="Hayashi K."/>
            <person name="Sato H."/>
            <person name="Nagai K."/>
            <person name="Kimura K."/>
            <person name="Makita H."/>
            <person name="Sekine M."/>
            <person name="Obayashi M."/>
            <person name="Nishi T."/>
            <person name="Shibahara T."/>
            <person name="Tanaka T."/>
            <person name="Ishii S."/>
            <person name="Yamamoto J."/>
            <person name="Saito K."/>
            <person name="Kawai Y."/>
            <person name="Isono Y."/>
            <person name="Nakamura Y."/>
            <person name="Nagahari K."/>
            <person name="Murakami K."/>
            <person name="Yasuda T."/>
            <person name="Iwayanagi T."/>
            <person name="Wagatsuma M."/>
            <person name="Shiratori A."/>
            <person name="Sudo H."/>
            <person name="Hosoiri T."/>
            <person name="Kaku Y."/>
            <person name="Kodaira H."/>
            <person name="Kondo H."/>
            <person name="Sugawara M."/>
            <person name="Takahashi M."/>
            <person name="Kanda K."/>
            <person name="Yokoi T."/>
            <person name="Furuya T."/>
            <person name="Kikkawa E."/>
            <person name="Omura Y."/>
            <person name="Abe K."/>
            <person name="Kamihara K."/>
            <person name="Katsuta N."/>
            <person name="Sato K."/>
            <person name="Tanikawa M."/>
            <person name="Yamazaki M."/>
            <person name="Ninomiya K."/>
            <person name="Ishibashi T."/>
            <person name="Yamashita H."/>
            <person name="Murakawa K."/>
            <person name="Fujimori K."/>
            <person name="Tanai H."/>
            <person name="Kimata M."/>
            <person name="Watanabe M."/>
            <person name="Hiraoka S."/>
            <person name="Chiba Y."/>
            <person name="Ishida S."/>
            <person name="Ono Y."/>
            <person name="Takiguchi S."/>
            <person name="Watanabe S."/>
            <person name="Yosida M."/>
            <person name="Hotuta T."/>
            <person name="Kusano J."/>
            <person name="Kanehori K."/>
            <person name="Takahashi-Fujii A."/>
            <person name="Hara H."/>
            <person name="Tanase T.-O."/>
            <person name="Nomura Y."/>
            <person name="Togiya S."/>
            <person name="Komai F."/>
            <person name="Hara R."/>
            <person name="Takeuchi K."/>
            <person name="Arita M."/>
            <person name="Imose N."/>
            <person name="Musashino K."/>
            <person name="Yuuki H."/>
            <person name="Oshima A."/>
            <person name="Sasaki N."/>
            <person name="Aotsuka S."/>
            <person name="Yoshikawa Y."/>
            <person name="Matsunawa H."/>
            <person name="Ichihara T."/>
            <person name="Shiohata N."/>
            <person name="Sano S."/>
            <person name="Moriya S."/>
            <person name="Momiyama H."/>
            <person name="Satoh N."/>
            <person name="Takami S."/>
            <person name="Terashima Y."/>
            <person name="Suzuki O."/>
            <person name="Nakagawa S."/>
            <person name="Senoh A."/>
            <person name="Mizoguchi H."/>
            <person name="Goto Y."/>
            <person name="Shimizu F."/>
            <person name="Wakebe H."/>
            <person name="Hishigaki H."/>
            <person name="Watanabe T."/>
            <person name="Sugiyama A."/>
            <person name="Takemoto M."/>
            <person name="Kawakami B."/>
            <person name="Yamazaki M."/>
            <person name="Watanabe K."/>
            <person name="Kumagai A."/>
            <person name="Itakura S."/>
            <person name="Fukuzumi Y."/>
            <person name="Fujimori Y."/>
            <person name="Komiyama M."/>
            <person name="Tashiro H."/>
            <person name="Tanigami A."/>
            <person name="Fujiwara T."/>
            <person name="Ono T."/>
            <person name="Yamada K."/>
            <person name="Fujii Y."/>
            <person name="Ozaki K."/>
            <person name="Hirao M."/>
            <person name="Ohmori Y."/>
            <person name="Kawabata A."/>
            <person name="Hikiji T."/>
            <person name="Kobatake N."/>
            <person name="Inagaki H."/>
            <person name="Ikema Y."/>
            <person name="Okamoto S."/>
            <person name="Okitani R."/>
            <person name="Kawakami T."/>
            <person name="Noguchi S."/>
            <person name="Itoh T."/>
            <person name="Shigeta K."/>
            <person name="Senba T."/>
            <person name="Matsumura K."/>
            <person name="Nakajima Y."/>
            <person name="Mizuno T."/>
            <person name="Morinaga M."/>
            <person name="Sasaki M."/>
            <person name="Togashi T."/>
            <person name="Oyama M."/>
            <person name="Hata H."/>
            <person name="Watanabe M."/>
            <person name="Komatsu T."/>
            <person name="Mizushima-Sugano J."/>
            <person name="Satoh T."/>
            <person name="Shirai Y."/>
            <person name="Takahashi Y."/>
            <person name="Nakagawa K."/>
            <person name="Okumura K."/>
            <person name="Nagase T."/>
            <person name="Nomura N."/>
            <person name="Kikuchi H."/>
            <person name="Masuho Y."/>
            <person name="Yamashita R."/>
            <person name="Nakai K."/>
            <person name="Yada T."/>
            <person name="Nakamura Y."/>
            <person name="Ohara O."/>
            <person name="Isogai T."/>
            <person name="Sugano S."/>
        </authorList>
    </citation>
    <scope>NUCLEOTIDE SEQUENCE [LARGE SCALE MRNA] (ISOFORMS 1 AND 2)</scope>
    <source>
        <tissue>Colon</tissue>
        <tissue>Testis</tissue>
    </source>
</reference>
<reference key="5">
    <citation type="journal article" date="2006" name="Nature">
        <title>The DNA sequence and biological annotation of human chromosome 1.</title>
        <authorList>
            <person name="Gregory S.G."/>
            <person name="Barlow K.F."/>
            <person name="McLay K.E."/>
            <person name="Kaul R."/>
            <person name="Swarbreck D."/>
            <person name="Dunham A."/>
            <person name="Scott C.E."/>
            <person name="Howe K.L."/>
            <person name="Woodfine K."/>
            <person name="Spencer C.C.A."/>
            <person name="Jones M.C."/>
            <person name="Gillson C."/>
            <person name="Searle S."/>
            <person name="Zhou Y."/>
            <person name="Kokocinski F."/>
            <person name="McDonald L."/>
            <person name="Evans R."/>
            <person name="Phillips K."/>
            <person name="Atkinson A."/>
            <person name="Cooper R."/>
            <person name="Jones C."/>
            <person name="Hall R.E."/>
            <person name="Andrews T.D."/>
            <person name="Lloyd C."/>
            <person name="Ainscough R."/>
            <person name="Almeida J.P."/>
            <person name="Ambrose K.D."/>
            <person name="Anderson F."/>
            <person name="Andrew R.W."/>
            <person name="Ashwell R.I.S."/>
            <person name="Aubin K."/>
            <person name="Babbage A.K."/>
            <person name="Bagguley C.L."/>
            <person name="Bailey J."/>
            <person name="Beasley H."/>
            <person name="Bethel G."/>
            <person name="Bird C.P."/>
            <person name="Bray-Allen S."/>
            <person name="Brown J.Y."/>
            <person name="Brown A.J."/>
            <person name="Buckley D."/>
            <person name="Burton J."/>
            <person name="Bye J."/>
            <person name="Carder C."/>
            <person name="Chapman J.C."/>
            <person name="Clark S.Y."/>
            <person name="Clarke G."/>
            <person name="Clee C."/>
            <person name="Cobley V."/>
            <person name="Collier R.E."/>
            <person name="Corby N."/>
            <person name="Coville G.J."/>
            <person name="Davies J."/>
            <person name="Deadman R."/>
            <person name="Dunn M."/>
            <person name="Earthrowl M."/>
            <person name="Ellington A.G."/>
            <person name="Errington H."/>
            <person name="Frankish A."/>
            <person name="Frankland J."/>
            <person name="French L."/>
            <person name="Garner P."/>
            <person name="Garnett J."/>
            <person name="Gay L."/>
            <person name="Ghori M.R.J."/>
            <person name="Gibson R."/>
            <person name="Gilby L.M."/>
            <person name="Gillett W."/>
            <person name="Glithero R.J."/>
            <person name="Grafham D.V."/>
            <person name="Griffiths C."/>
            <person name="Griffiths-Jones S."/>
            <person name="Grocock R."/>
            <person name="Hammond S."/>
            <person name="Harrison E.S.I."/>
            <person name="Hart E."/>
            <person name="Haugen E."/>
            <person name="Heath P.D."/>
            <person name="Holmes S."/>
            <person name="Holt K."/>
            <person name="Howden P.J."/>
            <person name="Hunt A.R."/>
            <person name="Hunt S.E."/>
            <person name="Hunter G."/>
            <person name="Isherwood J."/>
            <person name="James R."/>
            <person name="Johnson C."/>
            <person name="Johnson D."/>
            <person name="Joy A."/>
            <person name="Kay M."/>
            <person name="Kershaw J.K."/>
            <person name="Kibukawa M."/>
            <person name="Kimberley A.M."/>
            <person name="King A."/>
            <person name="Knights A.J."/>
            <person name="Lad H."/>
            <person name="Laird G."/>
            <person name="Lawlor S."/>
            <person name="Leongamornlert D.A."/>
            <person name="Lloyd D.M."/>
            <person name="Loveland J."/>
            <person name="Lovell J."/>
            <person name="Lush M.J."/>
            <person name="Lyne R."/>
            <person name="Martin S."/>
            <person name="Mashreghi-Mohammadi M."/>
            <person name="Matthews L."/>
            <person name="Matthews N.S.W."/>
            <person name="McLaren S."/>
            <person name="Milne S."/>
            <person name="Mistry S."/>
            <person name="Moore M.J.F."/>
            <person name="Nickerson T."/>
            <person name="O'Dell C.N."/>
            <person name="Oliver K."/>
            <person name="Palmeiri A."/>
            <person name="Palmer S.A."/>
            <person name="Parker A."/>
            <person name="Patel D."/>
            <person name="Pearce A.V."/>
            <person name="Peck A.I."/>
            <person name="Pelan S."/>
            <person name="Phelps K."/>
            <person name="Phillimore B.J."/>
            <person name="Plumb R."/>
            <person name="Rajan J."/>
            <person name="Raymond C."/>
            <person name="Rouse G."/>
            <person name="Saenphimmachak C."/>
            <person name="Sehra H.K."/>
            <person name="Sheridan E."/>
            <person name="Shownkeen R."/>
            <person name="Sims S."/>
            <person name="Skuce C.D."/>
            <person name="Smith M."/>
            <person name="Steward C."/>
            <person name="Subramanian S."/>
            <person name="Sycamore N."/>
            <person name="Tracey A."/>
            <person name="Tromans A."/>
            <person name="Van Helmond Z."/>
            <person name="Wall M."/>
            <person name="Wallis J.M."/>
            <person name="White S."/>
            <person name="Whitehead S.L."/>
            <person name="Wilkinson J.E."/>
            <person name="Willey D.L."/>
            <person name="Williams H."/>
            <person name="Wilming L."/>
            <person name="Wray P.W."/>
            <person name="Wu Z."/>
            <person name="Coulson A."/>
            <person name="Vaudin M."/>
            <person name="Sulston J.E."/>
            <person name="Durbin R.M."/>
            <person name="Hubbard T."/>
            <person name="Wooster R."/>
            <person name="Dunham I."/>
            <person name="Carter N.P."/>
            <person name="McVean G."/>
            <person name="Ross M.T."/>
            <person name="Harrow J."/>
            <person name="Olson M.V."/>
            <person name="Beck S."/>
            <person name="Rogers J."/>
            <person name="Bentley D.R."/>
        </authorList>
    </citation>
    <scope>NUCLEOTIDE SEQUENCE [LARGE SCALE GENOMIC DNA]</scope>
</reference>
<reference key="6">
    <citation type="submission" date="2005-07" db="EMBL/GenBank/DDBJ databases">
        <authorList>
            <person name="Mural R.J."/>
            <person name="Istrail S."/>
            <person name="Sutton G.G."/>
            <person name="Florea L."/>
            <person name="Halpern A.L."/>
            <person name="Mobarry C.M."/>
            <person name="Lippert R."/>
            <person name="Walenz B."/>
            <person name="Shatkay H."/>
            <person name="Dew I."/>
            <person name="Miller J.R."/>
            <person name="Flanigan M.J."/>
            <person name="Edwards N.J."/>
            <person name="Bolanos R."/>
            <person name="Fasulo D."/>
            <person name="Halldorsson B.V."/>
            <person name="Hannenhalli S."/>
            <person name="Turner R."/>
            <person name="Yooseph S."/>
            <person name="Lu F."/>
            <person name="Nusskern D.R."/>
            <person name="Shue B.C."/>
            <person name="Zheng X.H."/>
            <person name="Zhong F."/>
            <person name="Delcher A.L."/>
            <person name="Huson D.H."/>
            <person name="Kravitz S.A."/>
            <person name="Mouchard L."/>
            <person name="Reinert K."/>
            <person name="Remington K.A."/>
            <person name="Clark A.G."/>
            <person name="Waterman M.S."/>
            <person name="Eichler E.E."/>
            <person name="Adams M.D."/>
            <person name="Hunkapiller M.W."/>
            <person name="Myers E.W."/>
            <person name="Venter J.C."/>
        </authorList>
    </citation>
    <scope>NUCLEOTIDE SEQUENCE [LARGE SCALE GENOMIC DNA]</scope>
</reference>
<reference key="7">
    <citation type="journal article" date="2004" name="Genome Res.">
        <title>The status, quality, and expansion of the NIH full-length cDNA project: the Mammalian Gene Collection (MGC).</title>
        <authorList>
            <consortium name="The MGC Project Team"/>
        </authorList>
    </citation>
    <scope>NUCLEOTIDE SEQUENCE [LARGE SCALE MRNA] (ISOFORM 1)</scope>
    <source>
        <tissue>Cervix</tissue>
        <tissue>Skin</tissue>
    </source>
</reference>
<reference key="8">
    <citation type="journal article" date="2011" name="BMC Syst. Biol.">
        <title>Initial characterization of the human central proteome.</title>
        <authorList>
            <person name="Burkard T.R."/>
            <person name="Planyavsky M."/>
            <person name="Kaupe I."/>
            <person name="Breitwieser F.P."/>
            <person name="Buerckstuemmer T."/>
            <person name="Bennett K.L."/>
            <person name="Superti-Furga G."/>
            <person name="Colinge J."/>
        </authorList>
    </citation>
    <scope>IDENTIFICATION BY MASS SPECTROMETRY [LARGE SCALE ANALYSIS]</scope>
</reference>
<reference key="9">
    <citation type="journal article" date="2012" name="PLoS Genet.">
        <title>UDP-galactose 4'-epimerase activities toward UDP-Gal and UDP-GalNAc play different roles in the development of Drosophila melanogaster.</title>
        <authorList>
            <person name="Daenzer J.M."/>
            <person name="Sanders R.D."/>
            <person name="Hang D."/>
            <person name="Fridovich-Keil J.L."/>
        </authorList>
    </citation>
    <scope>FUNCTION</scope>
    <scope>CATALYTIC ACTIVITY</scope>
    <scope>COFACTOR</scope>
</reference>
<reference key="10">
    <citation type="journal article" date="2013" name="Gene">
        <title>Comparison of dynamics of wildtype and V94M human UDP-galactose 4-epimerase-A computational perspective on severe epimerase-deficiency galactosemia.</title>
        <authorList>
            <person name="Timson D.J."/>
            <person name="Lindert S."/>
        </authorList>
    </citation>
    <scope>FUNCTION</scope>
</reference>
<reference key="11">
    <citation type="journal article" date="2004" name="J. Biol. Chem.">
        <title>Determinants of function and substrate specificity in human UDP-galactose 4'-epimerase.</title>
        <authorList>
            <person name="Schulz J.M."/>
            <person name="Watson A.L."/>
            <person name="Sanders R."/>
            <person name="Ross K.L."/>
            <person name="Thoden J.B."/>
            <person name="Holden H.M."/>
            <person name="Fridovich-Keil J.L."/>
        </authorList>
    </citation>
    <scope>MUTAGENESIS OF SER-132; TYR-157 AND CYS-307</scope>
</reference>
<reference key="12">
    <citation type="journal article" date="2014" name="J. Proteomics">
        <title>An enzyme assisted RP-RPLC approach for in-depth analysis of human liver phosphoproteome.</title>
        <authorList>
            <person name="Bian Y."/>
            <person name="Song C."/>
            <person name="Cheng K."/>
            <person name="Dong M."/>
            <person name="Wang F."/>
            <person name="Huang J."/>
            <person name="Sun D."/>
            <person name="Wang L."/>
            <person name="Ye M."/>
            <person name="Zou H."/>
        </authorList>
    </citation>
    <scope>IDENTIFICATION BY MASS SPECTROMETRY [LARGE SCALE ANALYSIS]</scope>
    <source>
        <tissue>Liver</tissue>
    </source>
</reference>
<reference key="13">
    <citation type="journal article" date="2000" name="Biochemistry">
        <title>Crystallographic evidence for Tyr 157 functioning as the active site Proton acceptor in human UDP-galactose 4-epimerase.</title>
        <authorList>
            <person name="Thoden J.B."/>
            <person name="Wohlers T.M."/>
            <person name="Fridovich-Keil J.L."/>
            <person name="Holden H.M."/>
        </authorList>
    </citation>
    <scope>X-RAY CRYSTALLOGRAPHY (1.50 ANGSTROMS) IN COMPLEX WITH NAD AND THE SUBSTRATE UDP-D-GLUCOSE</scope>
    <scope>SUBUNIT</scope>
</reference>
<reference key="14">
    <citation type="journal article" date="2001" name="J. Biol. Chem.">
        <title>Human UDP-galactose 4-epimerase. Accommodation of UDP-N-acetylglucosamine within the active site.</title>
        <authorList>
            <person name="Thoden J.B."/>
            <person name="Wohlers T.M."/>
            <person name="Fridovich-Keil J.L."/>
            <person name="Holden H.M."/>
        </authorList>
    </citation>
    <scope>X-RAY CRYSTALLOGRAPHY (1.50 ANGSTROMS) IN COMPLEX WITH NAD AND THE SUBSTRATE UDP-N-ACETYL-ALPHA-D-GLUCOSAMINE</scope>
</reference>
<reference key="15">
    <citation type="journal article" date="2001" name="J. Biol. Chem.">
        <title>Molecular basis for severe epimerase deficiency galactosemia. X-ray structure of the human V94m-substituted UDP-galactose 4-epimerase.</title>
        <authorList>
            <person name="Thoden J.B."/>
            <person name="Wohlers T.M."/>
            <person name="Fridovich-Keil J.L."/>
            <person name="Holden H.M."/>
        </authorList>
    </citation>
    <scope>X-RAY CRYSTALLOGRAPHY (1.5 ANGSTROMS) OF VARIANT GALAC3 MET-94 IN COMPLEXES WITH NAD AND THE SUBSTRATE ANALOGS UDP-D-GALACTOSE; UDP-N-ACETYL-ALPHA-D-GLUCOSAMINE; UDP-D-GLUCOSE</scope>
</reference>
<reference key="16">
    <citation type="journal article" date="1997" name="Am. J. Hum. Genet.">
        <title>Characterization of two mutations associated with epimerase-deficiency galactosemia, by use of a yeast expression system for human UDP-galactose-4-epimerase.</title>
        <authorList>
            <person name="Quimby B.B."/>
            <person name="Alano A."/>
            <person name="Almashanu S."/>
            <person name="Desandro A.M."/>
            <person name="Cowan T.M."/>
            <person name="Fridovich-Keil J.L."/>
        </authorList>
    </citation>
    <scope>VARIANTS GALAC3 SER-34 AND PRO-183</scope>
    <scope>VARIANT VAL-180</scope>
</reference>
<reference key="17">
    <citation type="journal article" date="1999" name="Am. J. Hum. Genet.">
        <title>Identification and characterization of a mutation, in the human UDP-galactose-4-epimerase gene, associated with generalized epimerase-deficiency galactosemia.</title>
        <authorList>
            <person name="Wohlers T.M."/>
            <person name="Christacos N.C."/>
            <person name="Harreman M.T."/>
            <person name="Fridovich-Keil J.L."/>
        </authorList>
    </citation>
    <scope>VARIANT GALAC3 MET-94</scope>
    <scope>CHARACTERIZATION OF VARIANTS GALAC3 GLU-90; MET-94; GLY-103 AND MET-313</scope>
</reference>
<reference key="18">
    <citation type="journal article" date="2000" name="J. Inherit. Metab. Dis.">
        <title>Studies of the V94M-substituted human UDPgalactose-4-epimerase enzyme associated with generalized epimerase-deficiency galactosaemia.</title>
        <authorList>
            <person name="Wohlers T.M."/>
            <person name="Fridovich-Keil J.L."/>
        </authorList>
    </citation>
    <scope>BIOPHYSICOCHEMICAL PROPERTIES</scope>
    <scope>CHARACTERIZATION OF VARIANT MET-94</scope>
</reference>
<reference key="19">
    <citation type="journal article" date="2001" name="Clin. Genet.">
        <title>A PCR-based method for detecting known mutations in the human UDP galactose-4'-epimerase gene associated with epimerase-deficiency galactosemia.</title>
        <authorList>
            <person name="Henderson J.M."/>
            <person name="Huguenin S.M."/>
            <person name="Cowan T.M."/>
            <person name="Fridovich-Keil J.L."/>
        </authorList>
    </citation>
    <scope>VARIANTS GALAC3 SER-34; GLU-90; MET-94; GLY-103; PRO-183; ARG-257; MET-313; GLU-319 AND HIS-335</scope>
</reference>
<reference key="20">
    <citation type="journal article" date="2005" name="FEBS J.">
        <title>Functional analysis of disease-causing mutations in human UDP-galactose 4-epimerase.</title>
        <authorList>
            <person name="Timson D.J."/>
        </authorList>
    </citation>
    <scope>BIOPHYSICOCHEMICAL PROPERTIES</scope>
    <scope>CHARACTERIZATION OF VARIANTS GALAC3 SER-34; GLU-90; MET-94; GLY-103; PRO-183; ARG-257; MET-313; GLU-319 AND HIS-335</scope>
    <scope>SUBUNIT</scope>
</reference>
<reference key="21">
    <citation type="journal article" date="2005" name="Genet. Med.">
        <title>The molecular basis of UDP-galactose-4-epimerase (GALE) deficiency galactosemia in Korean patients.</title>
        <authorList>
            <person name="Park H.-D."/>
            <person name="Park K.U."/>
            <person name="Kim J.Q."/>
            <person name="Shin C.H."/>
            <person name="Yang S.W."/>
            <person name="Lee D.H."/>
            <person name="Song Y.-H."/>
            <person name="Song J."/>
        </authorList>
    </citation>
    <scope>VARIANTS GALAC3 VAL-25; CYS-40; GLU-69; LYS-165; TRP-169; TRP-239; ASP-302 AND HIS-335</scope>
</reference>
<reference key="22">
    <citation type="journal article" date="2005" name="Mol. Genet. Metab.">
        <title>Functional characterization of the K257R and G319E-hGALE alleles found in patients with ostensibly peripheral epimerase deficiency galactosemia.</title>
        <authorList>
            <person name="Wasilenko J."/>
            <person name="Lucas M.E."/>
            <person name="Thoden J.B."/>
            <person name="Holden H.M."/>
            <person name="Fridovich-Keil J.L."/>
        </authorList>
    </citation>
    <scope>CHARACTERIZATION OF VARIANTS GALAC3 ARG-257 AND GLU-319</scope>
</reference>
<reference key="23">
    <citation type="journal article" date="2008" name="J. Inherit. Metab. Dis.">
        <title>Analysis of UDP-galactose 4'-epimerase mutations associated with the intermediate form of type III galactosaemia.</title>
        <authorList>
            <person name="Chhay J.S."/>
            <person name="Vargas C.A."/>
            <person name="McCorvie T.J."/>
            <person name="Fridovich-Keil J.L."/>
            <person name="Timson D.J."/>
        </authorList>
    </citation>
    <scope>CHARACTERIZATION OF VARIANT MET-150</scope>
    <scope>MUTAGENESIS OF SER-81</scope>
</reference>
<reference key="24">
    <citation type="journal article" date="2019" name="Hum. Mol. Genet.">
        <title>Inherited thrombocytopenia associated with mutation of UDP-galactose-4-epimerase (GALE).</title>
        <authorList>
            <person name="Seo A."/>
            <person name="Gulsuner S."/>
            <person name="Pierce S."/>
            <person name="Ben-Harosh M."/>
            <person name="Shalev H."/>
            <person name="Walsh T."/>
            <person name="Krasnov T."/>
            <person name="Dgany O."/>
            <person name="Doulatov S."/>
            <person name="Tamary H."/>
            <person name="Shimamura A."/>
            <person name="King M.C."/>
        </authorList>
    </citation>
    <scope>VARIANT THC13 TRP-51</scope>
    <scope>CHARACTERIZATION OF VARIANT THC13 TRP-51</scope>
    <scope>INVOLVEMENT IN THC13</scope>
</reference>
<reference key="25">
    <citation type="journal article" date="2020" name="Mol. Syndromol.">
        <title>A case of UDP-galactose 4'-epimerase deficiency associated with dyshematopoiesis and atrioventricular valve malformations: An exceptional clinical phenotype explained by altered N-glycosylation with relative preservation of the Leloir pathway.</title>
        <authorList>
            <person name="Febres-Aldana C.A."/>
            <person name="Pelaez L."/>
            <person name="Wright M.S."/>
            <person name="Maher O.M."/>
            <person name="Febres-Aldana A.J."/>
            <person name="Sasaki J."/>
            <person name="Jayakar P."/>
            <person name="Jayakar A."/>
            <person name="Diaz-Barbosa M."/>
            <person name="Janvier M."/>
            <person name="Totapally B."/>
            <person name="Salyakina D."/>
            <person name="Galvez-Silva J.R."/>
        </authorList>
    </citation>
    <scope>VARIANTS THC13 TRP-51 AND ASP-237</scope>
    <scope>INVOLVEMENT IN THC13</scope>
</reference>
<reference key="26">
    <citation type="journal article" date="2021" name="Am. J. Med. Genet. A">
        <title>Expansion of the clinical phenotype of GALE deficiency.</title>
        <authorList>
            <person name="Markovitz R."/>
            <person name="Owen N."/>
            <person name="Satter L.F."/>
            <person name="Kirk S."/>
            <person name="Mahoney D.H."/>
            <person name="Bertuch A.A."/>
            <person name="Scaglia F."/>
        </authorList>
    </citation>
    <scope>VARIANT THC13 MET-150</scope>
    <scope>INVOLVEMENT IN THC13</scope>
</reference>
<reference key="27">
    <citation type="journal article" date="2023" name="Blood">
        <title>Novel variants in GALE cause syndromic macrothrombocytopenia by disrupting glycosylation and thrombopoiesis.</title>
        <authorList>
            <person name="Marin-Quilez A."/>
            <person name="Di Buduo C.A."/>
            <person name="Diaz-Ajenjo L."/>
            <person name="Abbonante V."/>
            <person name="Vuelta E."/>
            <person name="Soprano P.M."/>
            <person name="Miguel-Garcia C."/>
            <person name="Santos-Minguez S."/>
            <person name="Serramito-Gomez I."/>
            <person name="Ruiz-Sala P."/>
            <person name="Penarrubia M.J."/>
            <person name="Pardal E."/>
            <person name="Hernandez-Rivas J.M."/>
            <person name="Gonzalez-Porras J.R."/>
            <person name="Garcia-Tunon I."/>
            <person name="Benito R."/>
            <person name="Rivera J."/>
            <person name="Balduini A."/>
            <person name="Bastida J.M."/>
        </authorList>
    </citation>
    <scope>VARIANTS THC13 MET-128 AND PRO-223</scope>
    <scope>INVOLVEMENT IN THC13</scope>
</reference>
<sequence>MAEKVLVTGGAGYIGSHTVLELLEAGYLPVVIDNFHNAFRGGGSLPESLRRVQELTGRSVEFEEMDILDQGALQRLFKKYSFMAVIHFAGLKAVGESVQKPLDYYRVNLTGTIQLLEIMKAHGVKNLVFSSSATVYGNPQYLPLDEAHPTGGCTNPYGKSKFFIEEMIRDLCQADKTWNAVLLRYFNPTGAHASGCIGEDPQGIPNNLMPYVSQVAIGRREALNVFGNDYDTEDGTGVRDYIHVVDLAKGHIAALRKLKEQCGCRIYNLGTGTGYSVLQMVQAMEKASGKKIPYKVVARREGDVAACYANPSLAQEELGWTAALGLDRMCEDLWRWQKQNPSGFGTQA</sequence>
<gene>
    <name evidence="26" type="primary">GALE</name>
</gene>
<protein>
    <recommendedName>
        <fullName evidence="23">UDP-glucose 4-epimerase</fullName>
        <ecNumber evidence="11">5.1.3.2</ecNumber>
    </recommendedName>
    <alternativeName>
        <fullName>Galactowaldenase</fullName>
    </alternativeName>
    <alternativeName>
        <fullName evidence="23">UDP-N-acetylgalactosamine 4-epimerase</fullName>
        <shortName evidence="23">UDP-GalNAc 4-epimerase</shortName>
    </alternativeName>
    <alternativeName>
        <fullName evidence="23">UDP-N-acetylglucosamine 4-epimerase</fullName>
        <shortName evidence="23">UDP-GlcNAc 4-epimerase</shortName>
        <ecNumber evidence="11">5.1.3.7</ecNumber>
    </alternativeName>
    <alternativeName>
        <fullName evidence="23">UDP-galactose 4-epimerase</fullName>
    </alternativeName>
</protein>
<accession>Q14376</accession>
<accession>A0A024RAH5</accession>
<accession>B3KQ39</accession>
<accession>Q38G75</accession>
<accession>Q86W41</accession>
<accession>Q9BVE3</accession>
<accession>Q9UJB4</accession>
<comment type="function">
    <text evidence="11 24">Catalyzes two distinct but analogous reactions: the reversible epimerization of UDP-glucose to UDP-galactose and the reversible epimerization of UDP-N-acetylglucosamine to UDP-N-acetylgalactosamine. The reaction with UDP-Gal plays a critical role in the Leloir pathway of galactose catabolism in which galactose is converted to the glycolytic intermediate glucose 6-phosphate. It contributes to the catabolism of dietary galactose and enables the endogenous biosynthesis of both UDP-Gal and UDP-GalNAc when exogenous sources are limited. Both UDP-sugar interconversions are important in the synthesis of glycoproteins and glycolipids.</text>
</comment>
<comment type="catalytic activity">
    <reaction evidence="11">
        <text>UDP-alpha-D-glucose = UDP-alpha-D-galactose</text>
        <dbReference type="Rhea" id="RHEA:22168"/>
        <dbReference type="ChEBI" id="CHEBI:58885"/>
        <dbReference type="ChEBI" id="CHEBI:66914"/>
        <dbReference type="EC" id="5.1.3.2"/>
    </reaction>
</comment>
<comment type="catalytic activity">
    <reaction evidence="11">
        <text>UDP-N-acetyl-alpha-D-glucosamine = UDP-N-acetyl-alpha-D-galactosamine</text>
        <dbReference type="Rhea" id="RHEA:20517"/>
        <dbReference type="ChEBI" id="CHEBI:57705"/>
        <dbReference type="ChEBI" id="CHEBI:67138"/>
        <dbReference type="EC" id="5.1.3.7"/>
    </reaction>
</comment>
<comment type="cofactor">
    <cofactor evidence="1 11 20 21">
        <name>NAD(+)</name>
        <dbReference type="ChEBI" id="CHEBI:57540"/>
    </cofactor>
</comment>
<comment type="biophysicochemical properties">
    <kinetics>
        <KM evidence="2 9">69 uM for UDP-galactose (at 37 degrees Celsius and pH 8.8)</KM>
        <Vmax evidence="2 9">1.22 mmol/min/mg enzyme with UDP-galactose as substrate</Vmax>
    </kinetics>
</comment>
<comment type="pathway">
    <text>Carbohydrate metabolism; galactose metabolism.</text>
</comment>
<comment type="subunit">
    <text evidence="1 9">Homodimer.</text>
</comment>
<comment type="interaction">
    <interactant intactId="EBI-750057">
        <id>Q14376</id>
    </interactant>
    <interactant intactId="EBI-750057">
        <id>Q14376</id>
        <label>GALE</label>
    </interactant>
    <organismsDiffer>false</organismsDiffer>
    <experiments>7</experiments>
</comment>
<comment type="alternative products">
    <event type="alternative splicing"/>
    <isoform>
        <id>Q14376-1</id>
        <name>1</name>
        <sequence type="displayed"/>
    </isoform>
    <isoform>
        <id>Q14376-2</id>
        <name>2</name>
        <sequence type="described" ref="VSP_056822"/>
    </isoform>
</comment>
<comment type="disease" evidence="4 5 7 8 9 17 18 19">
    <disease id="DI-01534">
        <name>Galactosemia 3</name>
        <acronym>GALAC3</acronym>
        <description>A form of galactosemia, an inborn error of galactose metabolism typically manifesting in the neonatal period, after ingestion of galactose, with jaundice, hepatosplenomegaly, hepatocellular insufficiency, food intolerance, hypoglycemia, renal tubular dysfunction, muscle hypotonia, sepsis and cataract. GALAC3 is an autosomal recessive form caused by galactose epimerase deficiency. It can manifest as benign, peripheral form with mild symptoms and enzymatic deficiency in circulating blood cells only. A second form, known as generalized epimerase deficiency, is characterized by undetectable levels of enzyme activity in all tissues and severe clinical features, including restricted growth and intellectual disability.</description>
        <dbReference type="MIM" id="230350"/>
    </disease>
    <text>The disease is caused by variants affecting the gene represented in this entry.</text>
</comment>
<comment type="disease" evidence="12 13 14 15">
    <disease id="DI-06880">
        <name>Thrombocytopenia 13, syndromic</name>
        <acronym>THC13</acronym>
        <description>An autosomal recessive form of thrombocytopenia, a hematologic disorder defined by a decrease in the number of platelets in circulating blood, resulting in the potential for increased bleeding and decreased ability for clotting. THC13 patients have enlarged, gray platelets with defective function. Some affected individuals have leukopenia or anemia and pancytopenia. Additional variable features include mitral valve malformations, pyloric stenosis, and impaired intellectual development.</description>
        <dbReference type="MIM" id="620776"/>
    </disease>
    <text>The disease is caused by variants affecting the gene represented in this entry.</text>
</comment>
<comment type="miscellaneous">
    <text evidence="3">Contrary to the human enzyme, the E.coli ortholog (AC P09147) does not catalyze the epimerization of UDP-N-acetylglucosamine to UDP-N-acetylgalactosamine. Compared to the E.coli enzyme, the sugar-binding pocket of the active site is 15% larger for the human enzyme, making it possible to accommodate the acetyl group.</text>
</comment>
<comment type="similarity">
    <text evidence="25">Belongs to the NAD(P)-dependent epimerase/dehydratase family.</text>
</comment>
<comment type="sequence caution" evidence="25">
    <conflict type="erroneous gene model prediction">
        <sequence resource="EMBL-CDS" id="EAW95083"/>
    </conflict>
</comment>
<comment type="sequence caution" evidence="25">
    <conflict type="erroneous gene model prediction">
        <sequence resource="EMBL-CDS" id="EAW95084"/>
    </conflict>
</comment>
<comment type="sequence caution" evidence="25">
    <conflict type="erroneous gene model prediction">
        <sequence resource="EMBL-CDS" id="EAW95086"/>
    </conflict>
</comment>
<comment type="sequence caution" evidence="25">
    <conflict type="erroneous gene model prediction">
        <sequence resource="EMBL-CDS" id="EAW95090"/>
    </conflict>
</comment>
<comment type="sequence caution" evidence="25">
    <conflict type="erroneous gene model prediction">
        <sequence resource="EMBL-CDS" id="EAW95091"/>
    </conflict>
</comment>
<comment type="sequence caution" evidence="25">
    <conflict type="erroneous gene model prediction">
        <sequence resource="EMBL-CDS" id="EAW95092"/>
    </conflict>
</comment>
<comment type="sequence caution" evidence="25">
    <conflict type="erroneous gene model prediction">
        <sequence resource="EMBL-CDS" id="EAW95093"/>
    </conflict>
</comment>
<comment type="online information" name="Galactosemia Proteins Database">
    <link uri="http://bioinformatica.isa.cnr.it/galactosemia-proteins-db/index3.html"/>
</comment>
<name>GALE_HUMAN</name>
<feature type="chain" id="PRO_0000183189" description="UDP-glucose 4-epimerase">
    <location>
        <begin position="1"/>
        <end position="348"/>
    </location>
</feature>
<feature type="active site" description="Proton acceptor" evidence="1 3 4 22">
    <location>
        <position position="157"/>
    </location>
</feature>
<feature type="binding site" evidence="1 3 4">
    <location>
        <begin position="12"/>
        <end position="14"/>
    </location>
    <ligand>
        <name>NAD(+)</name>
        <dbReference type="ChEBI" id="CHEBI:57540"/>
    </ligand>
</feature>
<feature type="binding site" evidence="1 3 4">
    <location>
        <begin position="33"/>
        <end position="37"/>
    </location>
    <ligand>
        <name>NAD(+)</name>
        <dbReference type="ChEBI" id="CHEBI:57540"/>
    </ligand>
</feature>
<feature type="binding site" evidence="1 3 4">
    <location>
        <begin position="66"/>
        <end position="67"/>
    </location>
    <ligand>
        <name>NAD(+)</name>
        <dbReference type="ChEBI" id="CHEBI:57540"/>
    </ligand>
</feature>
<feature type="binding site" evidence="1 3 4">
    <location>
        <position position="88"/>
    </location>
    <ligand>
        <name>NAD(+)</name>
        <dbReference type="ChEBI" id="CHEBI:57540"/>
    </ligand>
</feature>
<feature type="binding site" evidence="1 3 4">
    <location>
        <position position="92"/>
    </location>
    <ligand>
        <name>NAD(+)</name>
        <dbReference type="ChEBI" id="CHEBI:57540"/>
    </ligand>
</feature>
<feature type="binding site" evidence="1 3 4 22">
    <location>
        <begin position="132"/>
        <end position="134"/>
    </location>
    <ligand>
        <name>substrate</name>
    </ligand>
</feature>
<feature type="binding site" evidence="1 3 4">
    <location>
        <position position="161"/>
    </location>
    <ligand>
        <name>NAD(+)</name>
        <dbReference type="ChEBI" id="CHEBI:57540"/>
    </ligand>
</feature>
<feature type="binding site" evidence="3 4">
    <location>
        <begin position="185"/>
        <end position="187"/>
    </location>
    <ligand>
        <name>substrate</name>
    </ligand>
</feature>
<feature type="binding site" evidence="1">
    <location>
        <position position="185"/>
    </location>
    <ligand>
        <name>NAD(+)</name>
        <dbReference type="ChEBI" id="CHEBI:57540"/>
    </ligand>
</feature>
<feature type="binding site" evidence="1 3 4">
    <location>
        <begin position="206"/>
        <end position="208"/>
    </location>
    <ligand>
        <name>substrate</name>
    </ligand>
</feature>
<feature type="binding site" evidence="1 3 4">
    <location>
        <begin position="224"/>
        <end position="226"/>
    </location>
    <ligand>
        <name>substrate</name>
    </ligand>
</feature>
<feature type="binding site" evidence="1 3 4">
    <location>
        <position position="239"/>
    </location>
    <ligand>
        <name>substrate</name>
    </ligand>
</feature>
<feature type="binding site" evidence="3 4">
    <location>
        <begin position="300"/>
        <end position="303"/>
    </location>
    <ligand>
        <name>substrate</name>
    </ligand>
</feature>
<feature type="splice variant" id="VSP_056822" description="In isoform 2.">
    <original>MAEKVLVTGGAGYIGSHTVLELLEAGYLPVVIDNFHNAFRGGGSLPESLRRVQELTGRSVEFEEMDILDQGALQRLFKK</original>
    <variation>MSPLQ</variation>
    <location>
        <begin position="1"/>
        <end position="79"/>
    </location>
</feature>
<feature type="sequence variant" id="VAR_037733" description="In GALAC3; dbSNP:rs1431772923." evidence="8">
    <original>A</original>
    <variation>V</variation>
    <location>
        <position position="25"/>
    </location>
</feature>
<feature type="sequence variant" id="VAR_002539" description="In GALAC3; peripheral; nearly normal activity towards UDP-galactose; dbSNP:rs121908046." evidence="5 9 17">
    <original>N</original>
    <variation>S</variation>
    <location>
        <position position="34"/>
    </location>
</feature>
<feature type="sequence variant" id="VAR_037734" description="In GALAC3; dbSNP:rs144492228." evidence="8">
    <original>R</original>
    <variation>C</variation>
    <location>
        <position position="40"/>
    </location>
</feature>
<feature type="sequence variant" id="VAR_089517" description="In THC13; likely pathogenic; decreased UDP-galactose epimerization activity; decreased UDP-N-acetylglucosamine epimerase activity; reduced NAD+ binding; decreased thermal stability." evidence="12">
    <original>R</original>
    <variation>W</variation>
    <location>
        <position position="51"/>
    </location>
</feature>
<feature type="sequence variant" id="VAR_037735" description="In GALAC3; dbSNP:rs1261697960." evidence="8">
    <original>D</original>
    <variation>E</variation>
    <location>
        <position position="69"/>
    </location>
</feature>
<feature type="sequence variant" id="VAR_002540" description="In GALAC3; 800-fold decrease in UDP-galactose epimerization activity; dbSNP:rs28940882." evidence="5 9 18 19">
    <original>G</original>
    <variation>E</variation>
    <location>
        <position position="90"/>
    </location>
</feature>
<feature type="sequence variant" id="VAR_010058" description="In GALAC3; generalized; 30-fold decrease in UDP-galactose epimerization activity; 2-fold decrease in affinity for UDP-galactose; 24% of normal activity with respect to UDP-N-acetylgalactosamine; dbSNP:rs121908047." evidence="2 5 9 19">
    <original>V</original>
    <variation>M</variation>
    <location>
        <position position="94"/>
    </location>
</feature>
<feature type="sequence variant" id="VAR_002541" description="In GALAC3; uncertain significance; 7-fold decrease in UDP-galactose epimerization activity; very mild decrease in activity towards UDP-N-acetylgalactosamine; dbSNP:rs28940883." evidence="5 9 18 19">
    <original>D</original>
    <variation>G</variation>
    <location>
        <position position="103"/>
    </location>
</feature>
<feature type="sequence variant" id="VAR_089518" description="In THC13; likely pathogenic." evidence="15">
    <original>V</original>
    <variation>M</variation>
    <location>
        <position position="128"/>
    </location>
</feature>
<feature type="sequence variant" id="VAR_089519" description="In THC13; likely pathogenic; 3-fold decreased catalytic efficiency for UDP-galactose epimerization." evidence="10 14">
    <original>T</original>
    <variation>M</variation>
    <location>
        <position position="150"/>
    </location>
</feature>
<feature type="sequence variant" id="VAR_037736" description="In GALAC3; dbSNP:rs528467258." evidence="8">
    <original>E</original>
    <variation>K</variation>
    <location>
        <position position="165"/>
    </location>
</feature>
<feature type="sequence variant" id="VAR_037737" description="In GALAC3; dbSNP:rs137853859." evidence="8">
    <original>R</original>
    <variation>W</variation>
    <location>
        <position position="169"/>
    </location>
</feature>
<feature type="sequence variant" id="VAR_002542" description="In dbSNP:rs3204468." evidence="16 17">
    <original>A</original>
    <variation>V</variation>
    <location>
        <position position="180"/>
    </location>
</feature>
<feature type="sequence variant" id="VAR_002543" description="In GALAC3; peripheral; 3-fold decrease in UDP-galactose epimerization activity; dbSNP:rs121908045." evidence="5 9 17">
    <original>L</original>
    <variation>P</variation>
    <location>
        <position position="183"/>
    </location>
</feature>
<feature type="sequence variant" id="VAR_089520" description="In THC13; likely pathogenic." evidence="15">
    <original>L</original>
    <variation>P</variation>
    <location>
        <position position="223"/>
    </location>
</feature>
<feature type="sequence variant" id="VAR_089521" description="In THC13; uncertain significance." evidence="13">
    <original>G</original>
    <variation>D</variation>
    <location>
        <position position="237"/>
    </location>
</feature>
<feature type="sequence variant" id="VAR_037738" description="In GALAC3; dbSNP:rs137853860." evidence="8">
    <original>R</original>
    <variation>W</variation>
    <location>
        <position position="239"/>
    </location>
</feature>
<feature type="sequence variant" id="VAR_002544" description="In GALAC3; 7-fold decrease in UDP-galactose epimerization activity; does not affect affinity for UDP-galactose; dbSNP:rs28940884." evidence="5 7 9 18">
    <original>K</original>
    <variation>R</variation>
    <location>
        <position position="257"/>
    </location>
</feature>
<feature type="sequence variant" id="VAR_037739" description="In GALAC3; dbSNP:rs137853861." evidence="8">
    <original>G</original>
    <variation>D</variation>
    <location>
        <position position="302"/>
    </location>
</feature>
<feature type="sequence variant" id="VAR_002545" description="In GALAC3; 6-fold decrease in UDP-galactose epimerization activity; very mild decrease in activity towards UDP-N-acetylgalactosamine; dbSNP:rs3180383." evidence="5 9 18 19">
    <original>L</original>
    <variation>M</variation>
    <location>
        <position position="313"/>
    </location>
</feature>
<feature type="sequence variant" id="VAR_002546" description="In GALAC3; nearly normal activity towards UDP-galactose; mild impairment under conditions of substrate limitation; dbSNP:rs28940885." evidence="5 7 9 18">
    <original>G</original>
    <variation>E</variation>
    <location>
        <position position="319"/>
    </location>
</feature>
<feature type="sequence variant" id="VAR_037740" description="In GALAC3; 2-fold decrease in UDP-galactose epimerization activity; dbSNP:rs368637540." evidence="5 8 9">
    <original>R</original>
    <variation>H</variation>
    <location>
        <position position="335"/>
    </location>
</feature>
<feature type="mutagenesis site" description="5-fold decreased catalytic efficiency for UDP-galactose epimerization." evidence="10">
    <original>S</original>
    <variation>R</variation>
    <location>
        <position position="81"/>
    </location>
</feature>
<feature type="mutagenesis site" description="Loss of activity." evidence="6">
    <original>S</original>
    <variation>A</variation>
    <location>
        <position position="132"/>
    </location>
</feature>
<feature type="mutagenesis site" description="Loss of activity." evidence="6">
    <original>Y</original>
    <variation>F</variation>
    <location>
        <position position="157"/>
    </location>
</feature>
<feature type="mutagenesis site" description="No effect on activity towards UDP-galactose. Loss of activity towards UDP-N-acetylgalactosamine." evidence="6">
    <original>C</original>
    <variation>Y</variation>
    <location>
        <position position="307"/>
    </location>
</feature>
<feature type="sequence conflict" description="In Ref. 4; BAG51901." ref="4">
    <original>P</original>
    <variation>S</variation>
    <location>
        <position position="293"/>
    </location>
</feature>
<feature type="strand" evidence="28">
    <location>
        <begin position="3"/>
        <end position="8"/>
    </location>
</feature>
<feature type="turn" evidence="28">
    <location>
        <begin position="9"/>
        <end position="11"/>
    </location>
</feature>
<feature type="helix" evidence="28">
    <location>
        <begin position="13"/>
        <end position="24"/>
    </location>
</feature>
<feature type="strand" evidence="28">
    <location>
        <begin position="29"/>
        <end position="33"/>
    </location>
</feature>
<feature type="strand" evidence="28">
    <location>
        <begin position="35"/>
        <end position="38"/>
    </location>
</feature>
<feature type="strand" evidence="28">
    <location>
        <begin position="42"/>
        <end position="46"/>
    </location>
</feature>
<feature type="helix" evidence="28">
    <location>
        <begin position="47"/>
        <end position="56"/>
    </location>
</feature>
<feature type="strand" evidence="28">
    <location>
        <begin position="61"/>
        <end position="64"/>
    </location>
</feature>
<feature type="helix" evidence="28">
    <location>
        <begin position="70"/>
        <end position="79"/>
    </location>
</feature>
<feature type="strand" evidence="28">
    <location>
        <begin position="82"/>
        <end position="87"/>
    </location>
</feature>
<feature type="helix" evidence="28">
    <location>
        <begin position="94"/>
        <end position="99"/>
    </location>
</feature>
<feature type="helix" evidence="28">
    <location>
        <begin position="101"/>
        <end position="121"/>
    </location>
</feature>
<feature type="strand" evidence="28">
    <location>
        <begin position="126"/>
        <end position="132"/>
    </location>
</feature>
<feature type="helix" evidence="28">
    <location>
        <begin position="133"/>
        <end position="136"/>
    </location>
</feature>
<feature type="strand" evidence="28">
    <location>
        <begin position="140"/>
        <end position="144"/>
    </location>
</feature>
<feature type="helix" evidence="28">
    <location>
        <begin position="156"/>
        <end position="174"/>
    </location>
</feature>
<feature type="strand" evidence="28">
    <location>
        <begin position="179"/>
        <end position="185"/>
    </location>
</feature>
<feature type="strand" evidence="28">
    <location>
        <begin position="187"/>
        <end position="189"/>
    </location>
</feature>
<feature type="strand" evidence="27">
    <location>
        <begin position="195"/>
        <end position="197"/>
    </location>
</feature>
<feature type="strand" evidence="28">
    <location>
        <begin position="202"/>
        <end position="204"/>
    </location>
</feature>
<feature type="helix" evidence="28">
    <location>
        <begin position="208"/>
        <end position="216"/>
    </location>
</feature>
<feature type="strand" evidence="28">
    <location>
        <begin position="219"/>
        <end position="221"/>
    </location>
</feature>
<feature type="strand" evidence="28">
    <location>
        <begin position="223"/>
        <end position="226"/>
    </location>
</feature>
<feature type="strand" evidence="28">
    <location>
        <begin position="230"/>
        <end position="236"/>
    </location>
</feature>
<feature type="strand" evidence="28">
    <location>
        <begin position="241"/>
        <end position="243"/>
    </location>
</feature>
<feature type="helix" evidence="28">
    <location>
        <begin position="244"/>
        <end position="258"/>
    </location>
</feature>
<feature type="turn" evidence="28">
    <location>
        <begin position="259"/>
        <end position="261"/>
    </location>
</feature>
<feature type="strand" evidence="28">
    <location>
        <begin position="264"/>
        <end position="269"/>
    </location>
</feature>
<feature type="helix" evidence="28">
    <location>
        <begin position="277"/>
        <end position="288"/>
    </location>
</feature>
<feature type="strand" evidence="28">
    <location>
        <begin position="294"/>
        <end position="297"/>
    </location>
</feature>
<feature type="strand" evidence="28">
    <location>
        <begin position="305"/>
        <end position="307"/>
    </location>
</feature>
<feature type="helix" evidence="28">
    <location>
        <begin position="312"/>
        <end position="316"/>
    </location>
</feature>
<feature type="helix" evidence="28">
    <location>
        <begin position="326"/>
        <end position="339"/>
    </location>
</feature>